<gene>
    <name type="primary">mcrD</name>
    <name type="ordered locus">MJ0843</name>
</gene>
<dbReference type="EMBL" id="L77117">
    <property type="protein sequence ID" value="AAB98848.1"/>
    <property type="molecule type" value="Genomic_DNA"/>
</dbReference>
<dbReference type="PIR" id="C64405">
    <property type="entry name" value="C64405"/>
</dbReference>
<dbReference type="SMR" id="Q58253"/>
<dbReference type="FunCoup" id="Q58253">
    <property type="interactions" value="12"/>
</dbReference>
<dbReference type="STRING" id="243232.MJ_0843"/>
<dbReference type="PaxDb" id="243232-MJ_0843"/>
<dbReference type="EnsemblBacteria" id="AAB98848">
    <property type="protein sequence ID" value="AAB98848"/>
    <property type="gene ID" value="MJ_0843"/>
</dbReference>
<dbReference type="KEGG" id="mja:MJ_0843"/>
<dbReference type="eggNOG" id="arCOG04859">
    <property type="taxonomic scope" value="Archaea"/>
</dbReference>
<dbReference type="HOGENOM" id="CLU_118415_0_0_2"/>
<dbReference type="InParanoid" id="Q58253"/>
<dbReference type="PhylomeDB" id="Q58253"/>
<dbReference type="Proteomes" id="UP000000805">
    <property type="component" value="Chromosome"/>
</dbReference>
<dbReference type="GO" id="GO:0015948">
    <property type="term" value="P:methanogenesis"/>
    <property type="evidence" value="ECO:0007669"/>
    <property type="project" value="UniProtKB-KW"/>
</dbReference>
<dbReference type="InterPro" id="IPR003901">
    <property type="entry name" value="Me_CoM_Rdtase_D"/>
</dbReference>
<dbReference type="NCBIfam" id="TIGR03260">
    <property type="entry name" value="met_CoM_red_D"/>
    <property type="match status" value="1"/>
</dbReference>
<dbReference type="Pfam" id="PF02505">
    <property type="entry name" value="MCR_D"/>
    <property type="match status" value="1"/>
</dbReference>
<dbReference type="PIRSF" id="PIRSF005636">
    <property type="entry name" value="McrD"/>
    <property type="match status" value="1"/>
</dbReference>
<feature type="chain" id="PRO_0000147494" description="Methyl-coenzyme M reductase I operon protein D">
    <location>
        <begin position="1"/>
        <end position="164"/>
    </location>
</feature>
<proteinExistence type="inferred from homology"/>
<protein>
    <recommendedName>
        <fullName>Methyl-coenzyme M reductase I operon protein D</fullName>
    </recommendedName>
</protein>
<accession>Q58253</accession>
<reference key="1">
    <citation type="journal article" date="1996" name="Science">
        <title>Complete genome sequence of the methanogenic archaeon, Methanococcus jannaschii.</title>
        <authorList>
            <person name="Bult C.J."/>
            <person name="White O."/>
            <person name="Olsen G.J."/>
            <person name="Zhou L."/>
            <person name="Fleischmann R.D."/>
            <person name="Sutton G.G."/>
            <person name="Blake J.A."/>
            <person name="FitzGerald L.M."/>
            <person name="Clayton R.A."/>
            <person name="Gocayne J.D."/>
            <person name="Kerlavage A.R."/>
            <person name="Dougherty B.A."/>
            <person name="Tomb J.-F."/>
            <person name="Adams M.D."/>
            <person name="Reich C.I."/>
            <person name="Overbeek R."/>
            <person name="Kirkness E.F."/>
            <person name="Weinstock K.G."/>
            <person name="Merrick J.M."/>
            <person name="Glodek A."/>
            <person name="Scott J.L."/>
            <person name="Geoghagen N.S.M."/>
            <person name="Weidman J.F."/>
            <person name="Fuhrmann J.L."/>
            <person name="Nguyen D."/>
            <person name="Utterback T.R."/>
            <person name="Kelley J.M."/>
            <person name="Peterson J.D."/>
            <person name="Sadow P.W."/>
            <person name="Hanna M.C."/>
            <person name="Cotton M.D."/>
            <person name="Roberts K.M."/>
            <person name="Hurst M.A."/>
            <person name="Kaine B.P."/>
            <person name="Borodovsky M."/>
            <person name="Klenk H.-P."/>
            <person name="Fraser C.M."/>
            <person name="Smith H.O."/>
            <person name="Woese C.R."/>
            <person name="Venter J.C."/>
        </authorList>
    </citation>
    <scope>NUCLEOTIDE SEQUENCE [LARGE SCALE GENOMIC DNA]</scope>
    <source>
        <strain>ATCC 43067 / DSM 2661 / JAL-1 / JCM 10045 / NBRC 100440</strain>
    </source>
</reference>
<comment type="subunit">
    <text evidence="1">MCR is composed of three subunits: alpha, beta, and gamma. The function of proteins C and D is not known (By similarity).</text>
</comment>
<sequence>MFMIEVEIFPHRYLKASTTEKFLNKIYDLKTVERVVIHGQPLPKVITYGPARGLPVNHTERKIIHVKGVPVELTVMAGRFWITLSDDSELDKLDEICKEMFPFGYNLRVGKFLKDRPTVTDYIKYGEDGVFLINEMDRRLIGMVDPRSRMANSVTVVEKEEKEE</sequence>
<organism>
    <name type="scientific">Methanocaldococcus jannaschii (strain ATCC 43067 / DSM 2661 / JAL-1 / JCM 10045 / NBRC 100440)</name>
    <name type="common">Methanococcus jannaschii</name>
    <dbReference type="NCBI Taxonomy" id="243232"/>
    <lineage>
        <taxon>Archaea</taxon>
        <taxon>Methanobacteriati</taxon>
        <taxon>Methanobacteriota</taxon>
        <taxon>Methanomada group</taxon>
        <taxon>Methanococci</taxon>
        <taxon>Methanococcales</taxon>
        <taxon>Methanocaldococcaceae</taxon>
        <taxon>Methanocaldococcus</taxon>
    </lineage>
</organism>
<name>MCRD_METJA</name>
<keyword id="KW-0484">Methanogenesis</keyword>
<keyword id="KW-1185">Reference proteome</keyword>
<evidence type="ECO:0000250" key="1"/>